<evidence type="ECO:0000269" key="1">
    <source>
    </source>
</evidence>
<evidence type="ECO:0000303" key="2">
    <source>
    </source>
</evidence>
<sequence>METFCYMKWPVRHHKSRRVSH</sequence>
<name>YLIM_ECOLI</name>
<keyword id="KW-1185">Reference proteome</keyword>
<gene>
    <name evidence="2" type="primary">yliM</name>
    <name type="ordered locus">b4736</name>
</gene>
<proteinExistence type="evidence at protein level"/>
<protein>
    <recommendedName>
        <fullName evidence="2">Protein YliM</fullName>
    </recommendedName>
</protein>
<dbReference type="EMBL" id="U00096">
    <property type="protein sequence ID" value="AYC08188.1"/>
    <property type="molecule type" value="Genomic_DNA"/>
</dbReference>
<dbReference type="EnsemblBacteria" id="AYC08188">
    <property type="protein sequence ID" value="AYC08188"/>
    <property type="gene ID" value="b4736"/>
</dbReference>
<dbReference type="InParanoid" id="P0DPN6"/>
<dbReference type="BioCyc" id="EcoCyc:MONOMER0-4413"/>
<dbReference type="PRO" id="PR:P0DPN6"/>
<dbReference type="Proteomes" id="UP000000625">
    <property type="component" value="Chromosome"/>
</dbReference>
<organism>
    <name type="scientific">Escherichia coli (strain K12)</name>
    <dbReference type="NCBI Taxonomy" id="83333"/>
    <lineage>
        <taxon>Bacteria</taxon>
        <taxon>Pseudomonadati</taxon>
        <taxon>Pseudomonadota</taxon>
        <taxon>Gammaproteobacteria</taxon>
        <taxon>Enterobacterales</taxon>
        <taxon>Enterobacteriaceae</taxon>
        <taxon>Escherichia</taxon>
    </lineage>
</organism>
<feature type="chain" id="PRO_0000445164" description="Protein YliM">
    <location>
        <begin position="1"/>
        <end position="21"/>
    </location>
</feature>
<accession>P0DPN6</accession>
<accession>A0A385XJC7</accession>
<comment type="induction">
    <text evidence="1">Expressed in both exponential and stationary phase; expression is considerably higher in exponential phase (at protein level).</text>
</comment>
<reference key="1">
    <citation type="journal article" date="1997" name="Science">
        <title>The complete genome sequence of Escherichia coli K-12.</title>
        <authorList>
            <person name="Blattner F.R."/>
            <person name="Plunkett G. III"/>
            <person name="Bloch C.A."/>
            <person name="Perna N.T."/>
            <person name="Burland V."/>
            <person name="Riley M."/>
            <person name="Collado-Vides J."/>
            <person name="Glasner J.D."/>
            <person name="Rode C.K."/>
            <person name="Mayhew G.F."/>
            <person name="Gregor J."/>
            <person name="Davis N.W."/>
            <person name="Kirkpatrick H.A."/>
            <person name="Goeden M.A."/>
            <person name="Rose D.J."/>
            <person name="Mau B."/>
            <person name="Shao Y."/>
        </authorList>
    </citation>
    <scope>NUCLEOTIDE SEQUENCE [LARGE SCALE GENOMIC DNA]</scope>
    <source>
        <strain>K12 / MG1655 / ATCC 47076</strain>
    </source>
</reference>
<reference key="2">
    <citation type="journal article" date="2018" name="Proteomics">
        <title>Identifying new small proteins in Escherichia coli.</title>
        <authorList>
            <person name="VanOrsdel C.E."/>
            <person name="Kelly J.P."/>
            <person name="Burke B.N."/>
            <person name="Lein C.D."/>
            <person name="Oufiero C.E."/>
            <person name="Sanchez J.F."/>
            <person name="Wimmers L.E."/>
            <person name="Hearn D.J."/>
            <person name="Abuikhdair F.J."/>
            <person name="Barnhart K.R."/>
            <person name="Duley M.L."/>
            <person name="Ernst S.E.G."/>
            <person name="Kenerson B.A."/>
            <person name="Serafin A.J."/>
            <person name="Hemm M.R."/>
        </authorList>
    </citation>
    <scope>IDENTIFICATION</scope>
    <scope>INDUCTION</scope>
</reference>